<accession>Q8FWR4</accession>
<accession>G0KCC0</accession>
<organism>
    <name type="scientific">Brucella suis biovar 1 (strain 1330)</name>
    <dbReference type="NCBI Taxonomy" id="204722"/>
    <lineage>
        <taxon>Bacteria</taxon>
        <taxon>Pseudomonadati</taxon>
        <taxon>Pseudomonadota</taxon>
        <taxon>Alphaproteobacteria</taxon>
        <taxon>Hyphomicrobiales</taxon>
        <taxon>Brucellaceae</taxon>
        <taxon>Brucella/Ochrobactrum group</taxon>
        <taxon>Brucella</taxon>
    </lineage>
</organism>
<sequence length="182" mass="19894">MKNLFRTAALMVPLSLALAYGAQAKEIPIGKPQLLGGMEIAAVYLQPIEMEPEGMMRPAKDSDVHLEADIKAAKDNTNGFAEGDWVPYLVVSYELTHLDNGKVQKGDFMPMVANDGPHYGDNVKLDGPGKYKLKLFVSPPSANQHAHFGRHVDKETGVGPWFKPVTAEYEFVYAGTGKKGAY</sequence>
<feature type="signal peptide" evidence="1">
    <location>
        <begin position="1"/>
        <end position="24"/>
    </location>
</feature>
<feature type="chain" id="PRO_0000284482" description="UPF0423 protein BRA0381/BS1330_II0378">
    <location>
        <begin position="25"/>
        <end position="182"/>
    </location>
</feature>
<comment type="similarity">
    <text evidence="2">Belongs to the UPF0423 family.</text>
</comment>
<gene>
    <name type="ordered locus">BRA0381</name>
    <name type="ordered locus">BS1330_II0378</name>
</gene>
<protein>
    <recommendedName>
        <fullName>UPF0423 protein BRA0381/BS1330_II0378</fullName>
    </recommendedName>
</protein>
<reference key="1">
    <citation type="journal article" date="2002" name="Proc. Natl. Acad. Sci. U.S.A.">
        <title>The Brucella suis genome reveals fundamental similarities between animal and plant pathogens and symbionts.</title>
        <authorList>
            <person name="Paulsen I.T."/>
            <person name="Seshadri R."/>
            <person name="Nelson K.E."/>
            <person name="Eisen J.A."/>
            <person name="Heidelberg J.F."/>
            <person name="Read T.D."/>
            <person name="Dodson R.J."/>
            <person name="Umayam L.A."/>
            <person name="Brinkac L.M."/>
            <person name="Beanan M.J."/>
            <person name="Daugherty S.C."/>
            <person name="DeBoy R.T."/>
            <person name="Durkin A.S."/>
            <person name="Kolonay J.F."/>
            <person name="Madupu R."/>
            <person name="Nelson W.C."/>
            <person name="Ayodeji B."/>
            <person name="Kraul M."/>
            <person name="Shetty J."/>
            <person name="Malek J.A."/>
            <person name="Van Aken S.E."/>
            <person name="Riedmuller S."/>
            <person name="Tettelin H."/>
            <person name="Gill S.R."/>
            <person name="White O."/>
            <person name="Salzberg S.L."/>
            <person name="Hoover D.L."/>
            <person name="Lindler L.E."/>
            <person name="Halling S.M."/>
            <person name="Boyle S.M."/>
            <person name="Fraser C.M."/>
        </authorList>
    </citation>
    <scope>NUCLEOTIDE SEQUENCE [LARGE SCALE GENOMIC DNA]</scope>
    <source>
        <strain>1330</strain>
    </source>
</reference>
<reference key="2">
    <citation type="journal article" date="2011" name="J. Bacteriol.">
        <title>Revised genome sequence of Brucella suis 1330.</title>
        <authorList>
            <person name="Tae H."/>
            <person name="Shallom S."/>
            <person name="Settlage R."/>
            <person name="Preston D."/>
            <person name="Adams L.G."/>
            <person name="Garner H.R."/>
        </authorList>
    </citation>
    <scope>NUCLEOTIDE SEQUENCE [LARGE SCALE GENOMIC DNA]</scope>
    <source>
        <strain>1330</strain>
    </source>
</reference>
<proteinExistence type="inferred from homology"/>
<name>Y381_BRUSU</name>
<keyword id="KW-0732">Signal</keyword>
<dbReference type="EMBL" id="AE014292">
    <property type="protein sequence ID" value="AAN33579.1"/>
    <property type="molecule type" value="Genomic_DNA"/>
</dbReference>
<dbReference type="EMBL" id="CP002998">
    <property type="protein sequence ID" value="AEM19858.1"/>
    <property type="molecule type" value="Genomic_DNA"/>
</dbReference>
<dbReference type="RefSeq" id="WP_002966226.1">
    <property type="nucleotide sequence ID" value="NZ_KN046805.1"/>
</dbReference>
<dbReference type="SMR" id="Q8FWR4"/>
<dbReference type="KEGG" id="bms:BRA0381"/>
<dbReference type="KEGG" id="bsi:BS1330_II0378"/>
<dbReference type="PATRIC" id="fig|204722.21.peg.118"/>
<dbReference type="HOGENOM" id="CLU_100963_1_0_5"/>
<dbReference type="PhylomeDB" id="Q8FWR4"/>
<dbReference type="Proteomes" id="UP000007104">
    <property type="component" value="Chromosome II"/>
</dbReference>
<dbReference type="Gene3D" id="2.60.40.2480">
    <property type="entry name" value="Periplasmic metal-binding protein Tp34-type"/>
    <property type="match status" value="1"/>
</dbReference>
<dbReference type="InterPro" id="IPR018470">
    <property type="entry name" value="Metal-bd_Tp34-typ"/>
</dbReference>
<dbReference type="InterPro" id="IPR038482">
    <property type="entry name" value="Tp34-type_sf"/>
</dbReference>
<dbReference type="Pfam" id="PF10634">
    <property type="entry name" value="Iron_transport"/>
    <property type="match status" value="1"/>
</dbReference>
<dbReference type="PIRSF" id="PIRSF017018">
    <property type="entry name" value="Tp34"/>
    <property type="match status" value="1"/>
</dbReference>
<evidence type="ECO:0000255" key="1"/>
<evidence type="ECO:0000305" key="2"/>